<organism>
    <name type="scientific">Verminephrobacter eiseniae (strain EF01-2)</name>
    <dbReference type="NCBI Taxonomy" id="391735"/>
    <lineage>
        <taxon>Bacteria</taxon>
        <taxon>Pseudomonadati</taxon>
        <taxon>Pseudomonadota</taxon>
        <taxon>Betaproteobacteria</taxon>
        <taxon>Burkholderiales</taxon>
        <taxon>Comamonadaceae</taxon>
        <taxon>Verminephrobacter</taxon>
    </lineage>
</organism>
<comment type="similarity">
    <text evidence="1">Belongs to the bacterial ribosomal protein bL32 family.</text>
</comment>
<evidence type="ECO:0000255" key="1">
    <source>
        <dbReference type="HAMAP-Rule" id="MF_00340"/>
    </source>
</evidence>
<evidence type="ECO:0000256" key="2">
    <source>
        <dbReference type="SAM" id="MobiDB-lite"/>
    </source>
</evidence>
<evidence type="ECO:0000305" key="3"/>
<accession>A1WMX7</accession>
<reference key="1">
    <citation type="submission" date="2006-12" db="EMBL/GenBank/DDBJ databases">
        <title>Complete sequence of chromosome 1 of Verminephrobacter eiseniae EF01-2.</title>
        <authorList>
            <person name="Copeland A."/>
            <person name="Lucas S."/>
            <person name="Lapidus A."/>
            <person name="Barry K."/>
            <person name="Detter J.C."/>
            <person name="Glavina del Rio T."/>
            <person name="Dalin E."/>
            <person name="Tice H."/>
            <person name="Pitluck S."/>
            <person name="Chertkov O."/>
            <person name="Brettin T."/>
            <person name="Bruce D."/>
            <person name="Han C."/>
            <person name="Tapia R."/>
            <person name="Gilna P."/>
            <person name="Schmutz J."/>
            <person name="Larimer F."/>
            <person name="Land M."/>
            <person name="Hauser L."/>
            <person name="Kyrpides N."/>
            <person name="Kim E."/>
            <person name="Stahl D."/>
            <person name="Richardson P."/>
        </authorList>
    </citation>
    <scope>NUCLEOTIDE SEQUENCE [LARGE SCALE GENOMIC DNA]</scope>
    <source>
        <strain>EF01-2</strain>
    </source>
</reference>
<sequence length="60" mass="6638">MAVQQNKKSPSKRGMHRSHNALALPGIAVEPTSGEVHLRHHISPNGFYRGRQVLKPKSEA</sequence>
<feature type="chain" id="PRO_0000296595" description="Large ribosomal subunit protein bL32">
    <location>
        <begin position="1"/>
        <end position="60"/>
    </location>
</feature>
<feature type="region of interest" description="Disordered" evidence="2">
    <location>
        <begin position="1"/>
        <end position="28"/>
    </location>
</feature>
<feature type="region of interest" description="Disordered" evidence="2">
    <location>
        <begin position="41"/>
        <end position="60"/>
    </location>
</feature>
<feature type="compositionally biased region" description="Basic residues" evidence="2">
    <location>
        <begin position="9"/>
        <end position="19"/>
    </location>
</feature>
<gene>
    <name evidence="1" type="primary">rpmF</name>
    <name type="ordered locus">Veis_3254</name>
</gene>
<proteinExistence type="inferred from homology"/>
<keyword id="KW-1185">Reference proteome</keyword>
<keyword id="KW-0687">Ribonucleoprotein</keyword>
<keyword id="KW-0689">Ribosomal protein</keyword>
<protein>
    <recommendedName>
        <fullName evidence="1">Large ribosomal subunit protein bL32</fullName>
    </recommendedName>
    <alternativeName>
        <fullName evidence="3">50S ribosomal protein L32</fullName>
    </alternativeName>
</protein>
<name>RL32_VEREI</name>
<dbReference type="EMBL" id="CP000542">
    <property type="protein sequence ID" value="ABM58984.1"/>
    <property type="molecule type" value="Genomic_DNA"/>
</dbReference>
<dbReference type="RefSeq" id="WP_011810976.1">
    <property type="nucleotide sequence ID" value="NC_008786.1"/>
</dbReference>
<dbReference type="SMR" id="A1WMX7"/>
<dbReference type="STRING" id="391735.Veis_3254"/>
<dbReference type="GeneID" id="76461703"/>
<dbReference type="KEGG" id="vei:Veis_3254"/>
<dbReference type="eggNOG" id="COG0333">
    <property type="taxonomic scope" value="Bacteria"/>
</dbReference>
<dbReference type="HOGENOM" id="CLU_129084_2_1_4"/>
<dbReference type="OrthoDB" id="9801927at2"/>
<dbReference type="Proteomes" id="UP000000374">
    <property type="component" value="Chromosome"/>
</dbReference>
<dbReference type="GO" id="GO:0015934">
    <property type="term" value="C:large ribosomal subunit"/>
    <property type="evidence" value="ECO:0007669"/>
    <property type="project" value="InterPro"/>
</dbReference>
<dbReference type="GO" id="GO:0003735">
    <property type="term" value="F:structural constituent of ribosome"/>
    <property type="evidence" value="ECO:0007669"/>
    <property type="project" value="InterPro"/>
</dbReference>
<dbReference type="GO" id="GO:0006412">
    <property type="term" value="P:translation"/>
    <property type="evidence" value="ECO:0007669"/>
    <property type="project" value="UniProtKB-UniRule"/>
</dbReference>
<dbReference type="HAMAP" id="MF_00340">
    <property type="entry name" value="Ribosomal_bL32"/>
    <property type="match status" value="1"/>
</dbReference>
<dbReference type="InterPro" id="IPR002677">
    <property type="entry name" value="Ribosomal_bL32"/>
</dbReference>
<dbReference type="InterPro" id="IPR044957">
    <property type="entry name" value="Ribosomal_bL32_bact"/>
</dbReference>
<dbReference type="InterPro" id="IPR011332">
    <property type="entry name" value="Ribosomal_zn-bd"/>
</dbReference>
<dbReference type="NCBIfam" id="TIGR01031">
    <property type="entry name" value="rpmF_bact"/>
    <property type="match status" value="1"/>
</dbReference>
<dbReference type="PANTHER" id="PTHR35534">
    <property type="entry name" value="50S RIBOSOMAL PROTEIN L32"/>
    <property type="match status" value="1"/>
</dbReference>
<dbReference type="PANTHER" id="PTHR35534:SF1">
    <property type="entry name" value="LARGE RIBOSOMAL SUBUNIT PROTEIN BL32"/>
    <property type="match status" value="1"/>
</dbReference>
<dbReference type="Pfam" id="PF01783">
    <property type="entry name" value="Ribosomal_L32p"/>
    <property type="match status" value="1"/>
</dbReference>
<dbReference type="SUPFAM" id="SSF57829">
    <property type="entry name" value="Zn-binding ribosomal proteins"/>
    <property type="match status" value="1"/>
</dbReference>